<organism>
    <name type="scientific">Candida albicans (strain SC5314 / ATCC MYA-2876)</name>
    <name type="common">Yeast</name>
    <dbReference type="NCBI Taxonomy" id="237561"/>
    <lineage>
        <taxon>Eukaryota</taxon>
        <taxon>Fungi</taxon>
        <taxon>Dikarya</taxon>
        <taxon>Ascomycota</taxon>
        <taxon>Saccharomycotina</taxon>
        <taxon>Pichiomycetes</taxon>
        <taxon>Debaryomycetaceae</taxon>
        <taxon>Candida/Lodderomyces clade</taxon>
        <taxon>Candida</taxon>
    </lineage>
</organism>
<feature type="chain" id="PRO_0000458633" description="Ubiquitin">
    <location>
        <begin position="1"/>
        <end position="76"/>
    </location>
</feature>
<feature type="chain" id="PRO_0000458634" description="Ubiquitin">
    <location>
        <begin position="77"/>
        <end position="152"/>
    </location>
</feature>
<feature type="chain" id="PRO_0000458635" description="Ubiquitin">
    <location>
        <begin position="153"/>
        <end position="228"/>
    </location>
</feature>
<feature type="propeptide" id="PRO_0000458636">
    <location>
        <position position="229"/>
    </location>
</feature>
<feature type="domain" description="Ubiquitin-like 1" evidence="4">
    <location>
        <begin position="1"/>
        <end position="76"/>
    </location>
</feature>
<feature type="domain" description="Ubiquitin-like 2" evidence="4">
    <location>
        <begin position="77"/>
        <end position="152"/>
    </location>
</feature>
<feature type="domain" description="Ubiquitin-like 3" evidence="4">
    <location>
        <begin position="153"/>
        <end position="228"/>
    </location>
</feature>
<feature type="cross-link" description="Glycyl lysine isopeptide (Lys-Gly) (interchain with G-Cter in ubiquitin)" evidence="2">
    <location>
        <position position="6"/>
    </location>
</feature>
<feature type="cross-link" description="Glycyl lysine isopeptide (Lys-Gly) (interchain with G-Cter in ubiquitin)" evidence="2">
    <location>
        <position position="11"/>
    </location>
</feature>
<feature type="cross-link" description="Glycyl lysine isopeptide (Lys-Gly) (interchain with G-Cter in ubiquitin)" evidence="2">
    <location>
        <position position="27"/>
    </location>
</feature>
<feature type="cross-link" description="Glycyl lysine isopeptide (Lys-Gly) (interchain with G-Cter in ubiquitin)" evidence="2">
    <location>
        <position position="29"/>
    </location>
</feature>
<feature type="cross-link" description="Glycyl lysine isopeptide (Lys-Gly) (interchain with G-Cter in ubiquitin)" evidence="2">
    <location>
        <position position="33"/>
    </location>
</feature>
<feature type="cross-link" description="Glycyl lysine isopeptide (Lys-Gly) (interchain with G-Cter in ubiquitin)" evidence="3">
    <location>
        <position position="48"/>
    </location>
</feature>
<feature type="cross-link" description="Glycyl lysine isopeptide (Lys-Gly) (interchain with G-Cter in ubiquitin)" evidence="2">
    <location>
        <position position="63"/>
    </location>
</feature>
<feature type="cross-link" description="Glycyl lysine isopeptide (Gly-Lys) (interchain with K-? in acceptor proteins)" evidence="4">
    <location>
        <position position="76"/>
    </location>
</feature>
<comment type="function">
    <text evidence="2 5 6">Ubiquitin exists either covalently attached to another protein, or free (unanchored). When covalently bound, it is conjugated to target proteins via an isopeptide bond either as a monomer (monoubiquitin), a polymer linked via different Lys residues of the ubiquitin (polyubiquitin chains) or a linear polymer linked via the initiator Met of the ubiquitin (linear polyubiquitin chains). Polyubiquitin chains, when attached to a target protein, have different functions depending on the Lys residue of the ubiquitin that is linked: Lys-6-linked may be involved in DNA repair; Lys-11-linked is involved in ERAD (endoplasmic reticulum-associated degradation) and in cell-cycle regulation; Lys-29-linked is involved in lysosomal degradation; Lys-33-linked is involved in kinase modification; Lys-48-linked is involved in protein degradation via the proteasome; Lys-63-linked is involved in endocytosis, and DNA-damage responses. Linear polymer chains formed via attachment by the initiator Met lead to cell signaling. Ubiquitin is usually conjugated to Lys residues of target proteins, however, in rare cases, conjugation to Cys or Ser residues has been observed. When polyubiquitin is free (unanchored-polyubiquitin), it also has distinct roles, such as in activation of protein kinases, and in signaling (By similarity). Involved in the negative control of switching, as well as in maintaining the yeast cell morphology (PubMed:12742065, PubMed:21269335).</text>
</comment>
<comment type="subcellular location">
    <subcellularLocation>
        <location evidence="1">Cytoplasm</location>
    </subcellularLocation>
    <subcellularLocation>
        <location evidence="1">Nucleus</location>
    </subcellularLocation>
</comment>
<comment type="disruption phenotype">
    <text evidence="5 6">Confers pleiotropic effects like an increased sensitivity to mild heat shock, increased formation of colony morphology variants and induction of hyphal and pseudohypal development (PubMed:12742065). Induces cell cycle defects, as well as sensitivity to thermal, oxidative and cell wall stresses. Rapidly lose viability under starvation conditions (PubMed:21269335).</text>
</comment>
<comment type="miscellaneous">
    <text evidence="7">Ubiquitin is encoded by several different genes. UBI3 is a polyprotein with one copy of ubiquitin fused to ribosomal protein eS31. UBI4 is a polyprotein containing 3 exact head to tail repeats of ubiquitin.</text>
</comment>
<comment type="miscellaneous">
    <text evidence="7">For the sake of clarity sequence features are annotated only for the first chain, and are not repeated for each of the following chains.</text>
</comment>
<comment type="similarity">
    <text evidence="7">Belongs to the ubiquitin family.</text>
</comment>
<name>UBI4P_CANAL</name>
<accession>Q5ADS0</accession>
<accession>O74274</accession>
<protein>
    <recommendedName>
        <fullName>Polyubiquitin</fullName>
    </recommendedName>
    <component>
        <recommendedName>
            <fullName>Ubiquitin</fullName>
        </recommendedName>
    </component>
</protein>
<evidence type="ECO:0000250" key="1"/>
<evidence type="ECO:0000250" key="2">
    <source>
        <dbReference type="UniProtKB" id="P0CG47"/>
    </source>
</evidence>
<evidence type="ECO:0000250" key="3">
    <source>
        <dbReference type="UniProtKB" id="P0CG63"/>
    </source>
</evidence>
<evidence type="ECO:0000255" key="4">
    <source>
        <dbReference type="PROSITE-ProRule" id="PRU00214"/>
    </source>
</evidence>
<evidence type="ECO:0000269" key="5">
    <source>
    </source>
</evidence>
<evidence type="ECO:0000269" key="6">
    <source>
    </source>
</evidence>
<evidence type="ECO:0000305" key="7"/>
<gene>
    <name type="primary">UBI4</name>
    <name type="synonym">UBI1</name>
    <name type="ordered locus">orf19.14063</name>
    <name type="ORF">CAALFM_C307270CA</name>
</gene>
<reference key="1">
    <citation type="journal article" date="2004" name="Proc. Natl. Acad. Sci. U.S.A.">
        <title>The diploid genome sequence of Candida albicans.</title>
        <authorList>
            <person name="Jones T."/>
            <person name="Federspiel N.A."/>
            <person name="Chibana H."/>
            <person name="Dungan J."/>
            <person name="Kalman S."/>
            <person name="Magee B.B."/>
            <person name="Newport G."/>
            <person name="Thorstenson Y.R."/>
            <person name="Agabian N."/>
            <person name="Magee P.T."/>
            <person name="Davis R.W."/>
            <person name="Scherer S."/>
        </authorList>
    </citation>
    <scope>NUCLEOTIDE SEQUENCE [LARGE SCALE GENOMIC DNA]</scope>
    <source>
        <strain>SC5314 / ATCC MYA-2876</strain>
    </source>
</reference>
<reference key="2">
    <citation type="journal article" date="2007" name="Genome Biol.">
        <title>Assembly of the Candida albicans genome into sixteen supercontigs aligned on the eight chromosomes.</title>
        <authorList>
            <person name="van het Hoog M."/>
            <person name="Rast T.J."/>
            <person name="Martchenko M."/>
            <person name="Grindle S."/>
            <person name="Dignard D."/>
            <person name="Hogues H."/>
            <person name="Cuomo C."/>
            <person name="Berriman M."/>
            <person name="Scherer S."/>
            <person name="Magee B.B."/>
            <person name="Whiteway M."/>
            <person name="Chibana H."/>
            <person name="Nantel A."/>
            <person name="Magee P.T."/>
        </authorList>
    </citation>
    <scope>GENOME REANNOTATION</scope>
    <source>
        <strain>SC5314 / ATCC MYA-2876</strain>
    </source>
</reference>
<reference key="3">
    <citation type="journal article" date="2013" name="Genome Biol.">
        <title>Assembly of a phased diploid Candida albicans genome facilitates allele-specific measurements and provides a simple model for repeat and indel structure.</title>
        <authorList>
            <person name="Muzzey D."/>
            <person name="Schwartz K."/>
            <person name="Weissman J.S."/>
            <person name="Sherlock G."/>
        </authorList>
    </citation>
    <scope>NUCLEOTIDE SEQUENCE [LARGE SCALE GENOMIC DNA]</scope>
    <scope>GENOME REANNOTATION</scope>
    <source>
        <strain>SC5314 / ATCC MYA-2876</strain>
    </source>
</reference>
<reference key="4">
    <citation type="journal article" date="2003" name="Fungal Genet. Biol.">
        <title>Depletion of polyubiquitin encoded by the UBI4 gene confers pleiotropic phenotype to Candida albicans cells.</title>
        <authorList>
            <person name="Roig P."/>
            <person name="Gozalbo D."/>
        </authorList>
    </citation>
    <scope>FUNCTION</scope>
    <scope>DISRUPTION PHENOTYPE</scope>
</reference>
<reference key="5">
    <citation type="journal article" date="2011" name="Mol. Microbiol.">
        <title>Molecular and proteomic analyses highlight the importance of ubiquitination for the stress resistance, metabolic adaptation, morphogenetic regulation and virulence of Candida albicans.</title>
        <authorList>
            <person name="Leach M.D."/>
            <person name="Stead D.A."/>
            <person name="Argo E."/>
            <person name="MacCallum D.M."/>
            <person name="Brown A.J."/>
        </authorList>
    </citation>
    <scope>FUNCTION</scope>
    <scope>DISRUPTION PHENOTYPE</scope>
</reference>
<sequence>MQIFVKTLTGKTITLEVESSDTIDNVKSKIQDKEGIPPDQQRLIFAGKQLEDGRTLSDYNIQKESTLHLVLRLRGGMQIFVKTLTGKTITLEVESSDTIDNVKSKIQDKEGIPPDQQRLIFAGKQLEDGRTLSDYNIQKESTLHLVLRLRGGMQIFVKTLTGKTITLEVESSDTIDNVKSKIQDKEGIPPDQQRLIFAGKQLEDGRTLSDYNIQKESTLHLVLRLRGGF</sequence>
<proteinExistence type="inferred from homology"/>
<dbReference type="EMBL" id="CP017625">
    <property type="protein sequence ID" value="AOW28729.1"/>
    <property type="molecule type" value="Genomic_DNA"/>
</dbReference>
<dbReference type="RefSeq" id="XP_719867.1">
    <property type="nucleotide sequence ID" value="XM_714774.2"/>
</dbReference>
<dbReference type="SMR" id="Q5ADS0"/>
<dbReference type="FunCoup" id="Q5ADS0">
    <property type="interactions" value="693"/>
</dbReference>
<dbReference type="STRING" id="237561.Q5ADS0"/>
<dbReference type="EnsemblFungi" id="C3_07270C_A-T">
    <property type="protein sequence ID" value="C3_07270C_A-T-p1"/>
    <property type="gene ID" value="C3_07270C_A"/>
</dbReference>
<dbReference type="GeneID" id="3638432"/>
<dbReference type="KEGG" id="cal:CAALFM_C307270CA"/>
<dbReference type="CGD" id="CAL0000186339">
    <property type="gene designation" value="UBI4"/>
</dbReference>
<dbReference type="VEuPathDB" id="FungiDB:C3_07270C_A"/>
<dbReference type="eggNOG" id="KOG0001">
    <property type="taxonomic scope" value="Eukaryota"/>
</dbReference>
<dbReference type="HOGENOM" id="CLU_010412_0_0_1"/>
<dbReference type="InParanoid" id="Q5ADS0"/>
<dbReference type="OMA" id="MSDEHTL"/>
<dbReference type="OrthoDB" id="428577at2759"/>
<dbReference type="Proteomes" id="UP000000559">
    <property type="component" value="Chromosome 3"/>
</dbReference>
<dbReference type="GO" id="GO:0005737">
    <property type="term" value="C:cytoplasm"/>
    <property type="evidence" value="ECO:0000318"/>
    <property type="project" value="GO_Central"/>
</dbReference>
<dbReference type="GO" id="GO:0005634">
    <property type="term" value="C:nucleus"/>
    <property type="evidence" value="ECO:0000318"/>
    <property type="project" value="GO_Central"/>
</dbReference>
<dbReference type="GO" id="GO:0005886">
    <property type="term" value="C:plasma membrane"/>
    <property type="evidence" value="ECO:0000314"/>
    <property type="project" value="CGD"/>
</dbReference>
<dbReference type="GO" id="GO:0031386">
    <property type="term" value="F:protein tag activity"/>
    <property type="evidence" value="ECO:0000316"/>
    <property type="project" value="CGD"/>
</dbReference>
<dbReference type="GO" id="GO:0031625">
    <property type="term" value="F:ubiquitin protein ligase binding"/>
    <property type="evidence" value="ECO:0000318"/>
    <property type="project" value="GO_Central"/>
</dbReference>
<dbReference type="GO" id="GO:0000902">
    <property type="term" value="P:cell morphogenesis"/>
    <property type="evidence" value="ECO:0000315"/>
    <property type="project" value="CGD"/>
</dbReference>
<dbReference type="GO" id="GO:0034605">
    <property type="term" value="P:cellular response to heat"/>
    <property type="evidence" value="ECO:0000315"/>
    <property type="project" value="CGD"/>
</dbReference>
<dbReference type="GO" id="GO:0033554">
    <property type="term" value="P:cellular response to stress"/>
    <property type="evidence" value="ECO:0000315"/>
    <property type="project" value="CGD"/>
</dbReference>
<dbReference type="GO" id="GO:0030447">
    <property type="term" value="P:filamentous growth"/>
    <property type="evidence" value="ECO:0000315"/>
    <property type="project" value="CGD"/>
</dbReference>
<dbReference type="GO" id="GO:0044182">
    <property type="term" value="P:filamentous growth of a population of unicellular organisms"/>
    <property type="evidence" value="ECO:0000315"/>
    <property type="project" value="CGD"/>
</dbReference>
<dbReference type="GO" id="GO:0019941">
    <property type="term" value="P:modification-dependent protein catabolic process"/>
    <property type="evidence" value="ECO:0000318"/>
    <property type="project" value="GO_Central"/>
</dbReference>
<dbReference type="GO" id="GO:0036166">
    <property type="term" value="P:phenotypic switching"/>
    <property type="evidence" value="ECO:0000315"/>
    <property type="project" value="CGD"/>
</dbReference>
<dbReference type="GO" id="GO:0016567">
    <property type="term" value="P:protein ubiquitination"/>
    <property type="evidence" value="ECO:0000315"/>
    <property type="project" value="CGD"/>
</dbReference>
<dbReference type="CDD" id="cd01803">
    <property type="entry name" value="Ubl_ubiquitin"/>
    <property type="match status" value="3"/>
</dbReference>
<dbReference type="FunFam" id="3.10.20.90:FF:000004">
    <property type="entry name" value="Polyubiquitin Ubiquitin"/>
    <property type="match status" value="3"/>
</dbReference>
<dbReference type="Gene3D" id="3.10.20.90">
    <property type="entry name" value="Phosphatidylinositol 3-kinase Catalytic Subunit, Chain A, domain 1"/>
    <property type="match status" value="3"/>
</dbReference>
<dbReference type="InterPro" id="IPR000626">
    <property type="entry name" value="Ubiquitin-like_dom"/>
</dbReference>
<dbReference type="InterPro" id="IPR029071">
    <property type="entry name" value="Ubiquitin-like_domsf"/>
</dbReference>
<dbReference type="InterPro" id="IPR019954">
    <property type="entry name" value="Ubiquitin_CS"/>
</dbReference>
<dbReference type="InterPro" id="IPR019956">
    <property type="entry name" value="Ubiquitin_dom"/>
</dbReference>
<dbReference type="InterPro" id="IPR050158">
    <property type="entry name" value="Ubiquitin_ubiquitin-like"/>
</dbReference>
<dbReference type="PANTHER" id="PTHR10666">
    <property type="entry name" value="UBIQUITIN"/>
    <property type="match status" value="1"/>
</dbReference>
<dbReference type="Pfam" id="PF00240">
    <property type="entry name" value="ubiquitin"/>
    <property type="match status" value="3"/>
</dbReference>
<dbReference type="PRINTS" id="PR00348">
    <property type="entry name" value="UBIQUITIN"/>
</dbReference>
<dbReference type="SMART" id="SM00213">
    <property type="entry name" value="UBQ"/>
    <property type="match status" value="3"/>
</dbReference>
<dbReference type="SUPFAM" id="SSF54236">
    <property type="entry name" value="Ubiquitin-like"/>
    <property type="match status" value="3"/>
</dbReference>
<dbReference type="PROSITE" id="PS00299">
    <property type="entry name" value="UBIQUITIN_1"/>
    <property type="match status" value="3"/>
</dbReference>
<dbReference type="PROSITE" id="PS50053">
    <property type="entry name" value="UBIQUITIN_2"/>
    <property type="match status" value="3"/>
</dbReference>
<keyword id="KW-0963">Cytoplasm</keyword>
<keyword id="KW-1017">Isopeptide bond</keyword>
<keyword id="KW-0539">Nucleus</keyword>
<keyword id="KW-1185">Reference proteome</keyword>
<keyword id="KW-0832">Ubl conjugation</keyword>